<evidence type="ECO:0000255" key="1">
    <source>
        <dbReference type="PROSITE-ProRule" id="PRU00145"/>
    </source>
</evidence>
<evidence type="ECO:0000255" key="2">
    <source>
        <dbReference type="PROSITE-ProRule" id="PRU00288"/>
    </source>
</evidence>
<evidence type="ECO:0000269" key="3">
    <source>
    </source>
</evidence>
<evidence type="ECO:0000269" key="4">
    <source>
    </source>
</evidence>
<evidence type="ECO:0000269" key="5">
    <source>
    </source>
</evidence>
<evidence type="ECO:0000269" key="6">
    <source>
    </source>
</evidence>
<evidence type="ECO:0000269" key="7">
    <source>
    </source>
</evidence>
<evidence type="ECO:0000269" key="8">
    <source>
    </source>
</evidence>
<evidence type="ECO:0000269" key="9">
    <source ref="3"/>
</evidence>
<evidence type="ECO:0000303" key="10">
    <source>
    </source>
</evidence>
<evidence type="ECO:0000303" key="11">
    <source>
    </source>
</evidence>
<evidence type="ECO:0000305" key="12"/>
<evidence type="ECO:0000312" key="13">
    <source>
        <dbReference type="EMBL" id="AAD11414.1"/>
    </source>
</evidence>
<evidence type="ECO:0000312" key="14">
    <source>
        <dbReference type="EMBL" id="AAH33747.1"/>
    </source>
</evidence>
<evidence type="ECO:0000312" key="15">
    <source>
        <dbReference type="EMBL" id="BAC77402.1"/>
    </source>
</evidence>
<evidence type="ECO:0000312" key="16">
    <source>
        <dbReference type="EMBL" id="CAA07024.1"/>
    </source>
</evidence>
<evidence type="ECO:0007744" key="17">
    <source>
    </source>
</evidence>
<evidence type="ECO:0007829" key="18">
    <source>
        <dbReference type="PDB" id="3FEH"/>
    </source>
</evidence>
<evidence type="ECO:0007829" key="19">
    <source>
        <dbReference type="PDB" id="3LJU"/>
    </source>
</evidence>
<evidence type="ECO:0007829" key="20">
    <source>
        <dbReference type="PDB" id="3MDB"/>
    </source>
</evidence>
<reference evidence="12" key="1">
    <citation type="journal article" date="1999" name="Biochem. Biophys. Res. Commun.">
        <title>Molecular cloning and functional characterization of a human homologue of centaurin-alpha.</title>
        <authorList>
            <person name="Venkateswarlu K."/>
            <person name="Cullen P.J."/>
        </authorList>
    </citation>
    <scope>NUCLEOTIDE SEQUENCE [MRNA] (ISOFORM 1)</scope>
    <scope>FUNCTION</scope>
    <scope>SUBCELLULAR LOCATION</scope>
    <scope>TISSUE SPECIFICITY</scope>
    <scope>MUTAGENESIS OF ARG-149 AND ARG-273</scope>
    <source>
        <tissue evidence="4">Blood</tissue>
    </source>
</reference>
<reference evidence="12 16" key="2">
    <citation type="journal article" date="1999" name="Biochem. J.">
        <title>Identification of centaurin-alpha1 as a potential in vivo phosphatidylinositol 3,4,5-trisphosphate-binding protein that is functionally homologous to the yeast ADP-ribosylation factor (ARF) GTPase-activating protein, Gcs1.</title>
        <authorList>
            <person name="Venkateswarlu K."/>
            <person name="Oatey P.B."/>
            <person name="Tavare J.M."/>
            <person name="Jackson T.R."/>
            <person name="Cullen P.J."/>
        </authorList>
    </citation>
    <scope>NUCLEOTIDE SEQUENCE [MRNA] (ISOFORM 1)</scope>
    <scope>FUNCTION</scope>
    <scope>SUBCELLULAR LOCATION</scope>
    <scope>MUTAGENESIS OF CYS-21; CYS-24; ARG-149 AND ARG-273</scope>
    <scope>VARIANT SER-241</scope>
    <source>
        <tissue evidence="16">Peripheral blood</tissue>
    </source>
</reference>
<reference evidence="13" key="3">
    <citation type="submission" date="1998-08" db="EMBL/GenBank/DDBJ databases">
        <title>Molecular identification of a high-affinity Ins(1,3,4,5)tetrakisphosphate/phosphatidylinositol(3,4, 5)trisphosphate binding protein from human brain, p42IP4.</title>
        <authorList>
            <person name="Horstmeyer A."/>
            <person name="Reiser G."/>
        </authorList>
    </citation>
    <scope>NUCLEOTIDE SEQUENCE [MRNA] (ISOFORM 1)</scope>
    <scope>VARIANT SER-241</scope>
    <source>
        <tissue evidence="13">Brain</tissue>
    </source>
</reference>
<reference evidence="12 15" key="4">
    <citation type="journal article" date="2003" name="Oncogene">
        <title>Large-scale identification and characterization of human genes that activate NF-kappaB and MAPK signaling pathways.</title>
        <authorList>
            <person name="Matsuda A."/>
            <person name="Suzuki Y."/>
            <person name="Honda G."/>
            <person name="Muramatsu S."/>
            <person name="Matsuzaki O."/>
            <person name="Nagano Y."/>
            <person name="Doi T."/>
            <person name="Shimotohno K."/>
            <person name="Harada T."/>
            <person name="Nishida E."/>
            <person name="Hayashi H."/>
            <person name="Sugano S."/>
        </authorList>
    </citation>
    <scope>NUCLEOTIDE SEQUENCE [LARGE SCALE MRNA] (ISOFORM 1)</scope>
    <scope>VARIANT SER-241</scope>
    <source>
        <tissue>Lung fibroblast</tissue>
    </source>
</reference>
<reference key="5">
    <citation type="journal article" date="2004" name="Nat. Genet.">
        <title>Complete sequencing and characterization of 21,243 full-length human cDNAs.</title>
        <authorList>
            <person name="Ota T."/>
            <person name="Suzuki Y."/>
            <person name="Nishikawa T."/>
            <person name="Otsuki T."/>
            <person name="Sugiyama T."/>
            <person name="Irie R."/>
            <person name="Wakamatsu A."/>
            <person name="Hayashi K."/>
            <person name="Sato H."/>
            <person name="Nagai K."/>
            <person name="Kimura K."/>
            <person name="Makita H."/>
            <person name="Sekine M."/>
            <person name="Obayashi M."/>
            <person name="Nishi T."/>
            <person name="Shibahara T."/>
            <person name="Tanaka T."/>
            <person name="Ishii S."/>
            <person name="Yamamoto J."/>
            <person name="Saito K."/>
            <person name="Kawai Y."/>
            <person name="Isono Y."/>
            <person name="Nakamura Y."/>
            <person name="Nagahari K."/>
            <person name="Murakami K."/>
            <person name="Yasuda T."/>
            <person name="Iwayanagi T."/>
            <person name="Wagatsuma M."/>
            <person name="Shiratori A."/>
            <person name="Sudo H."/>
            <person name="Hosoiri T."/>
            <person name="Kaku Y."/>
            <person name="Kodaira H."/>
            <person name="Kondo H."/>
            <person name="Sugawara M."/>
            <person name="Takahashi M."/>
            <person name="Kanda K."/>
            <person name="Yokoi T."/>
            <person name="Furuya T."/>
            <person name="Kikkawa E."/>
            <person name="Omura Y."/>
            <person name="Abe K."/>
            <person name="Kamihara K."/>
            <person name="Katsuta N."/>
            <person name="Sato K."/>
            <person name="Tanikawa M."/>
            <person name="Yamazaki M."/>
            <person name="Ninomiya K."/>
            <person name="Ishibashi T."/>
            <person name="Yamashita H."/>
            <person name="Murakawa K."/>
            <person name="Fujimori K."/>
            <person name="Tanai H."/>
            <person name="Kimata M."/>
            <person name="Watanabe M."/>
            <person name="Hiraoka S."/>
            <person name="Chiba Y."/>
            <person name="Ishida S."/>
            <person name="Ono Y."/>
            <person name="Takiguchi S."/>
            <person name="Watanabe S."/>
            <person name="Yosida M."/>
            <person name="Hotuta T."/>
            <person name="Kusano J."/>
            <person name="Kanehori K."/>
            <person name="Takahashi-Fujii A."/>
            <person name="Hara H."/>
            <person name="Tanase T.-O."/>
            <person name="Nomura Y."/>
            <person name="Togiya S."/>
            <person name="Komai F."/>
            <person name="Hara R."/>
            <person name="Takeuchi K."/>
            <person name="Arita M."/>
            <person name="Imose N."/>
            <person name="Musashino K."/>
            <person name="Yuuki H."/>
            <person name="Oshima A."/>
            <person name="Sasaki N."/>
            <person name="Aotsuka S."/>
            <person name="Yoshikawa Y."/>
            <person name="Matsunawa H."/>
            <person name="Ichihara T."/>
            <person name="Shiohata N."/>
            <person name="Sano S."/>
            <person name="Moriya S."/>
            <person name="Momiyama H."/>
            <person name="Satoh N."/>
            <person name="Takami S."/>
            <person name="Terashima Y."/>
            <person name="Suzuki O."/>
            <person name="Nakagawa S."/>
            <person name="Senoh A."/>
            <person name="Mizoguchi H."/>
            <person name="Goto Y."/>
            <person name="Shimizu F."/>
            <person name="Wakebe H."/>
            <person name="Hishigaki H."/>
            <person name="Watanabe T."/>
            <person name="Sugiyama A."/>
            <person name="Takemoto M."/>
            <person name="Kawakami B."/>
            <person name="Yamazaki M."/>
            <person name="Watanabe K."/>
            <person name="Kumagai A."/>
            <person name="Itakura S."/>
            <person name="Fukuzumi Y."/>
            <person name="Fujimori Y."/>
            <person name="Komiyama M."/>
            <person name="Tashiro H."/>
            <person name="Tanigami A."/>
            <person name="Fujiwara T."/>
            <person name="Ono T."/>
            <person name="Yamada K."/>
            <person name="Fujii Y."/>
            <person name="Ozaki K."/>
            <person name="Hirao M."/>
            <person name="Ohmori Y."/>
            <person name="Kawabata A."/>
            <person name="Hikiji T."/>
            <person name="Kobatake N."/>
            <person name="Inagaki H."/>
            <person name="Ikema Y."/>
            <person name="Okamoto S."/>
            <person name="Okitani R."/>
            <person name="Kawakami T."/>
            <person name="Noguchi S."/>
            <person name="Itoh T."/>
            <person name="Shigeta K."/>
            <person name="Senba T."/>
            <person name="Matsumura K."/>
            <person name="Nakajima Y."/>
            <person name="Mizuno T."/>
            <person name="Morinaga M."/>
            <person name="Sasaki M."/>
            <person name="Togashi T."/>
            <person name="Oyama M."/>
            <person name="Hata H."/>
            <person name="Watanabe M."/>
            <person name="Komatsu T."/>
            <person name="Mizushima-Sugano J."/>
            <person name="Satoh T."/>
            <person name="Shirai Y."/>
            <person name="Takahashi Y."/>
            <person name="Nakagawa K."/>
            <person name="Okumura K."/>
            <person name="Nagase T."/>
            <person name="Nomura N."/>
            <person name="Kikuchi H."/>
            <person name="Masuho Y."/>
            <person name="Yamashita R."/>
            <person name="Nakai K."/>
            <person name="Yada T."/>
            <person name="Nakamura Y."/>
            <person name="Ohara O."/>
            <person name="Isogai T."/>
            <person name="Sugano S."/>
        </authorList>
    </citation>
    <scope>NUCLEOTIDE SEQUENCE [LARGE SCALE MRNA] (ISOFORMS 2 AND 3)</scope>
    <source>
        <tissue>Small intestine</tissue>
    </source>
</reference>
<reference key="6">
    <citation type="journal article" date="2003" name="Science">
        <title>Human chromosome 7: DNA sequence and biology.</title>
        <authorList>
            <person name="Scherer S.W."/>
            <person name="Cheung J."/>
            <person name="MacDonald J.R."/>
            <person name="Osborne L.R."/>
            <person name="Nakabayashi K."/>
            <person name="Herbrick J.-A."/>
            <person name="Carson A.R."/>
            <person name="Parker-Katiraee L."/>
            <person name="Skaug J."/>
            <person name="Khaja R."/>
            <person name="Zhang J."/>
            <person name="Hudek A.K."/>
            <person name="Li M."/>
            <person name="Haddad M."/>
            <person name="Duggan G.E."/>
            <person name="Fernandez B.A."/>
            <person name="Kanematsu E."/>
            <person name="Gentles S."/>
            <person name="Christopoulos C.C."/>
            <person name="Choufani S."/>
            <person name="Kwasnicka D."/>
            <person name="Zheng X.H."/>
            <person name="Lai Z."/>
            <person name="Nusskern D.R."/>
            <person name="Zhang Q."/>
            <person name="Gu Z."/>
            <person name="Lu F."/>
            <person name="Zeesman S."/>
            <person name="Nowaczyk M.J."/>
            <person name="Teshima I."/>
            <person name="Chitayat D."/>
            <person name="Shuman C."/>
            <person name="Weksberg R."/>
            <person name="Zackai E.H."/>
            <person name="Grebe T.A."/>
            <person name="Cox S.R."/>
            <person name="Kirkpatrick S.J."/>
            <person name="Rahman N."/>
            <person name="Friedman J.M."/>
            <person name="Heng H.H.Q."/>
            <person name="Pelicci P.G."/>
            <person name="Lo-Coco F."/>
            <person name="Belloni E."/>
            <person name="Shaffer L.G."/>
            <person name="Pober B."/>
            <person name="Morton C.C."/>
            <person name="Gusella J.F."/>
            <person name="Bruns G.A.P."/>
            <person name="Korf B.R."/>
            <person name="Quade B.J."/>
            <person name="Ligon A.H."/>
            <person name="Ferguson H."/>
            <person name="Higgins A.W."/>
            <person name="Leach N.T."/>
            <person name="Herrick S.R."/>
            <person name="Lemyre E."/>
            <person name="Farra C.G."/>
            <person name="Kim H.-G."/>
            <person name="Summers A.M."/>
            <person name="Gripp K.W."/>
            <person name="Roberts W."/>
            <person name="Szatmari P."/>
            <person name="Winsor E.J.T."/>
            <person name="Grzeschik K.-H."/>
            <person name="Teebi A."/>
            <person name="Minassian B.A."/>
            <person name="Kere J."/>
            <person name="Armengol L."/>
            <person name="Pujana M.A."/>
            <person name="Estivill X."/>
            <person name="Wilson M.D."/>
            <person name="Koop B.F."/>
            <person name="Tosi S."/>
            <person name="Moore G.E."/>
            <person name="Boright A.P."/>
            <person name="Zlotorynski E."/>
            <person name="Kerem B."/>
            <person name="Kroisel P.M."/>
            <person name="Petek E."/>
            <person name="Oscier D.G."/>
            <person name="Mould S.J."/>
            <person name="Doehner H."/>
            <person name="Doehner K."/>
            <person name="Rommens J.M."/>
            <person name="Vincent J.B."/>
            <person name="Venter J.C."/>
            <person name="Li P.W."/>
            <person name="Mural R.J."/>
            <person name="Adams M.D."/>
            <person name="Tsui L.-C."/>
        </authorList>
    </citation>
    <scope>NUCLEOTIDE SEQUENCE [LARGE SCALE GENOMIC DNA]</scope>
</reference>
<reference evidence="13" key="7">
    <citation type="submission" date="2005-07" db="EMBL/GenBank/DDBJ databases">
        <authorList>
            <person name="Mural R.J."/>
            <person name="Istrail S."/>
            <person name="Sutton G.G."/>
            <person name="Florea L."/>
            <person name="Halpern A.L."/>
            <person name="Mobarry C.M."/>
            <person name="Lippert R."/>
            <person name="Walenz B."/>
            <person name="Shatkay H."/>
            <person name="Dew I."/>
            <person name="Miller J.R."/>
            <person name="Flanigan M.J."/>
            <person name="Edwards N.J."/>
            <person name="Bolanos R."/>
            <person name="Fasulo D."/>
            <person name="Halldorsson B.V."/>
            <person name="Hannenhalli S."/>
            <person name="Turner R."/>
            <person name="Yooseph S."/>
            <person name="Lu F."/>
            <person name="Nusskern D.R."/>
            <person name="Shue B.C."/>
            <person name="Zheng X.H."/>
            <person name="Zhong F."/>
            <person name="Delcher A.L."/>
            <person name="Huson D.H."/>
            <person name="Kravitz S.A."/>
            <person name="Mouchard L."/>
            <person name="Reinert K."/>
            <person name="Remington K.A."/>
            <person name="Clark A.G."/>
            <person name="Waterman M.S."/>
            <person name="Eichler E.E."/>
            <person name="Adams M.D."/>
            <person name="Hunkapiller M.W."/>
            <person name="Myers E.W."/>
            <person name="Venter J.C."/>
        </authorList>
    </citation>
    <scope>NUCLEOTIDE SEQUENCE [LARGE SCALE GENOMIC DNA]</scope>
</reference>
<reference evidence="14" key="8">
    <citation type="journal article" date="2004" name="Genome Res.">
        <title>The status, quality, and expansion of the NIH full-length cDNA project: the Mammalian Gene Collection (MGC).</title>
        <authorList>
            <consortium name="The MGC Project Team"/>
        </authorList>
    </citation>
    <scope>NUCLEOTIDE SEQUENCE [LARGE SCALE MRNA] (ISOFORM 1)</scope>
    <scope>VARIANT SER-241</scope>
    <source>
        <tissue evidence="14">Brain</tissue>
    </source>
</reference>
<reference evidence="12" key="9">
    <citation type="journal article" date="2003" name="Biochem. Biophys. Res. Commun.">
        <title>Centaurin-alpha(1) associates with and is phosphorylated by isoforms of protein kinase C.</title>
        <authorList>
            <person name="Zemlickova E."/>
            <person name="Dubois T."/>
            <person name="Kerai P."/>
            <person name="Clokie S."/>
            <person name="Cronshaw A.D."/>
            <person name="Wakefield R.I.D."/>
            <person name="Johannes F.-J."/>
            <person name="Aitken A."/>
        </authorList>
    </citation>
    <scope>INTERACTION WITH PRKCA; PRKCI; PRKCZ AND PRKD1</scope>
    <scope>PHOSPHORYLATION AT SER-87 AND THR-276</scope>
</reference>
<reference key="10">
    <citation type="journal article" date="2009" name="Science">
        <title>Lysine acetylation targets protein complexes and co-regulates major cellular functions.</title>
        <authorList>
            <person name="Choudhary C."/>
            <person name="Kumar C."/>
            <person name="Gnad F."/>
            <person name="Nielsen M.L."/>
            <person name="Rehman M."/>
            <person name="Walther T.C."/>
            <person name="Olsen J.V."/>
            <person name="Mann M."/>
        </authorList>
    </citation>
    <scope>ACETYLATION [LARGE SCALE ANALYSIS] AT LYS-272</scope>
    <scope>IDENTIFICATION BY MASS SPECTROMETRY [LARGE SCALE ANALYSIS]</scope>
</reference>
<reference key="11">
    <citation type="journal article" date="2024" name="Biol. Open">
        <title>Arf GTPase-Activating proteins ADAP1 and ARAP1 regulate incorporation of CD63 in multivesicular bodies.</title>
        <authorList>
            <person name="Suzuki K."/>
            <person name="Okawa Y."/>
            <person name="Akter S."/>
            <person name="Ito H."/>
            <person name="Shiba Y."/>
        </authorList>
    </citation>
    <scope>FUNCTION</scope>
</reference>
<reference evidence="13" key="12">
    <citation type="submission" date="2008-12" db="PDB data bank">
        <title>Crystal structure of full length centaurin alpha-1.</title>
        <authorList>
            <consortium name="Structural genomics consortium (SGC)"/>
        </authorList>
    </citation>
    <scope>X-RAY CRYSTALLOGRAPHY (1.9 ANGSTROMS) OF 3-370</scope>
</reference>
<dbReference type="EMBL" id="AJ006422">
    <property type="protein sequence ID" value="CAA07024.1"/>
    <property type="molecule type" value="mRNA"/>
</dbReference>
<dbReference type="EMBL" id="AF082324">
    <property type="protein sequence ID" value="AAD11414.1"/>
    <property type="molecule type" value="mRNA"/>
</dbReference>
<dbReference type="EMBL" id="AB097049">
    <property type="protein sequence ID" value="BAC77402.1"/>
    <property type="molecule type" value="mRNA"/>
</dbReference>
<dbReference type="EMBL" id="AK300999">
    <property type="protein sequence ID" value="BAG62618.1"/>
    <property type="molecule type" value="mRNA"/>
</dbReference>
<dbReference type="EMBL" id="AC073957">
    <property type="status" value="NOT_ANNOTATED_CDS"/>
    <property type="molecule type" value="Genomic_DNA"/>
</dbReference>
<dbReference type="EMBL" id="AK092471">
    <property type="protein sequence ID" value="BAG52556.1"/>
    <property type="molecule type" value="mRNA"/>
</dbReference>
<dbReference type="EMBL" id="CH236965">
    <property type="protein sequence ID" value="EAL23709.1"/>
    <property type="molecule type" value="Genomic_DNA"/>
</dbReference>
<dbReference type="EMBL" id="CH471144">
    <property type="protein sequence ID" value="EAW87183.1"/>
    <property type="molecule type" value="Genomic_DNA"/>
</dbReference>
<dbReference type="EMBL" id="CH471144">
    <property type="protein sequence ID" value="EAW87184.1"/>
    <property type="molecule type" value="Genomic_DNA"/>
</dbReference>
<dbReference type="EMBL" id="BC033747">
    <property type="protein sequence ID" value="AAH33747.1"/>
    <property type="molecule type" value="mRNA"/>
</dbReference>
<dbReference type="CCDS" id="CCDS5318.1">
    <molecule id="O75689-1"/>
</dbReference>
<dbReference type="CCDS" id="CCDS64576.1">
    <molecule id="O75689-3"/>
</dbReference>
<dbReference type="CCDS" id="CCDS64577.1">
    <molecule id="O75689-2"/>
</dbReference>
<dbReference type="PIR" id="JC7091">
    <property type="entry name" value="JC7091"/>
</dbReference>
<dbReference type="RefSeq" id="NP_001271237.2">
    <molecule id="O75689-2"/>
    <property type="nucleotide sequence ID" value="NM_001284308.2"/>
</dbReference>
<dbReference type="RefSeq" id="NP_001271238.2">
    <molecule id="O75689-3"/>
    <property type="nucleotide sequence ID" value="NM_001284309.2"/>
</dbReference>
<dbReference type="RefSeq" id="NP_001271239.2">
    <molecule id="O75689-3"/>
    <property type="nucleotide sequence ID" value="NM_001284310.2"/>
</dbReference>
<dbReference type="RefSeq" id="NP_001271240.1">
    <property type="nucleotide sequence ID" value="NM_001284311.1"/>
</dbReference>
<dbReference type="RefSeq" id="NP_006860.2">
    <molecule id="O75689-1"/>
    <property type="nucleotide sequence ID" value="NM_006869.4"/>
</dbReference>
<dbReference type="PDB" id="3FEH">
    <property type="method" value="X-ray"/>
    <property type="resolution" value="1.90 A"/>
    <property type="chains" value="A=3-370"/>
</dbReference>
<dbReference type="PDB" id="3FM8">
    <property type="method" value="X-ray"/>
    <property type="resolution" value="2.30 A"/>
    <property type="chains" value="C/D=1-374"/>
</dbReference>
<dbReference type="PDB" id="3LJU">
    <property type="method" value="X-ray"/>
    <property type="resolution" value="1.70 A"/>
    <property type="chains" value="X=3-370"/>
</dbReference>
<dbReference type="PDB" id="3MDB">
    <property type="method" value="X-ray"/>
    <property type="resolution" value="2.95 A"/>
    <property type="chains" value="C/D=1-374"/>
</dbReference>
<dbReference type="PDBsum" id="3FEH"/>
<dbReference type="PDBsum" id="3FM8"/>
<dbReference type="PDBsum" id="3LJU"/>
<dbReference type="PDBsum" id="3MDB"/>
<dbReference type="SMR" id="O75689"/>
<dbReference type="BioGRID" id="116222">
    <property type="interactions" value="24"/>
</dbReference>
<dbReference type="DIP" id="DIP-41731N"/>
<dbReference type="FunCoup" id="O75689">
    <property type="interactions" value="1614"/>
</dbReference>
<dbReference type="IntAct" id="O75689">
    <property type="interactions" value="11"/>
</dbReference>
<dbReference type="MINT" id="O75689"/>
<dbReference type="STRING" id="9606.ENSP00000442682"/>
<dbReference type="GlyGen" id="O75689">
    <property type="glycosylation" value="2 sites, 1 O-linked glycan (1 site)"/>
</dbReference>
<dbReference type="iPTMnet" id="O75689"/>
<dbReference type="PhosphoSitePlus" id="O75689"/>
<dbReference type="BioMuta" id="ADAP1"/>
<dbReference type="jPOST" id="O75689"/>
<dbReference type="MassIVE" id="O75689"/>
<dbReference type="PaxDb" id="9606-ENSP00000442682"/>
<dbReference type="PeptideAtlas" id="O75689"/>
<dbReference type="ProteomicsDB" id="28173"/>
<dbReference type="ProteomicsDB" id="45067"/>
<dbReference type="ProteomicsDB" id="50162">
    <molecule id="O75689-1"/>
</dbReference>
<dbReference type="Pumba" id="O75689"/>
<dbReference type="Antibodypedia" id="1977">
    <property type="antibodies" value="219 antibodies from 34 providers"/>
</dbReference>
<dbReference type="DNASU" id="11033"/>
<dbReference type="Ensembl" id="ENST00000265846.10">
    <molecule id="O75689-1"/>
    <property type="protein sequence ID" value="ENSP00000265846.5"/>
    <property type="gene ID" value="ENSG00000105963.15"/>
</dbReference>
<dbReference type="Ensembl" id="ENST00000449296.6">
    <molecule id="O75689-3"/>
    <property type="protein sequence ID" value="ENSP00000407267.2"/>
    <property type="gene ID" value="ENSG00000105963.15"/>
</dbReference>
<dbReference type="Ensembl" id="ENST00000539900.5">
    <molecule id="O75689-2"/>
    <property type="protein sequence ID" value="ENSP00000442682.1"/>
    <property type="gene ID" value="ENSG00000105963.15"/>
</dbReference>
<dbReference type="Ensembl" id="ENST00000611167.4">
    <molecule id="O75689-3"/>
    <property type="protein sequence ID" value="ENSP00000481154.1"/>
    <property type="gene ID" value="ENSG00000105963.15"/>
</dbReference>
<dbReference type="GeneID" id="11033"/>
<dbReference type="KEGG" id="hsa:11033"/>
<dbReference type="MANE-Select" id="ENST00000265846.10">
    <property type="protein sequence ID" value="ENSP00000265846.5"/>
    <property type="RefSeq nucleotide sequence ID" value="NM_006869.4"/>
    <property type="RefSeq protein sequence ID" value="NP_006860.2"/>
</dbReference>
<dbReference type="UCSC" id="uc003sjn.5">
    <molecule id="O75689-1"/>
    <property type="organism name" value="human"/>
</dbReference>
<dbReference type="AGR" id="HGNC:16486"/>
<dbReference type="CTD" id="11033"/>
<dbReference type="DisGeNET" id="11033"/>
<dbReference type="GeneCards" id="ADAP1"/>
<dbReference type="HGNC" id="HGNC:16486">
    <property type="gene designation" value="ADAP1"/>
</dbReference>
<dbReference type="HPA" id="ENSG00000105963">
    <property type="expression patterns" value="Tissue enhanced (brain)"/>
</dbReference>
<dbReference type="MIM" id="608114">
    <property type="type" value="gene"/>
</dbReference>
<dbReference type="neXtProt" id="NX_O75689"/>
<dbReference type="OpenTargets" id="ENSG00000105963"/>
<dbReference type="PharmGKB" id="PA26404"/>
<dbReference type="VEuPathDB" id="HostDB:ENSG00000105963"/>
<dbReference type="eggNOG" id="KOG0703">
    <property type="taxonomic scope" value="Eukaryota"/>
</dbReference>
<dbReference type="GeneTree" id="ENSGT00940000155698"/>
<dbReference type="HOGENOM" id="CLU_061583_0_0_1"/>
<dbReference type="InParanoid" id="O75689"/>
<dbReference type="OMA" id="YYNRNDA"/>
<dbReference type="PAN-GO" id="O75689">
    <property type="GO annotations" value="6 GO annotations based on evolutionary models"/>
</dbReference>
<dbReference type="PhylomeDB" id="O75689"/>
<dbReference type="TreeFam" id="TF324540"/>
<dbReference type="PathwayCommons" id="O75689"/>
<dbReference type="Reactome" id="R-HSA-1251985">
    <property type="pathway name" value="Nuclear signaling by ERBB4"/>
</dbReference>
<dbReference type="SignaLink" id="O75689"/>
<dbReference type="SIGNOR" id="O75689"/>
<dbReference type="BioGRID-ORCS" id="11033">
    <property type="hits" value="28 hits in 1146 CRISPR screens"/>
</dbReference>
<dbReference type="ChiTaRS" id="ADAP1">
    <property type="organism name" value="human"/>
</dbReference>
<dbReference type="EvolutionaryTrace" id="O75689"/>
<dbReference type="GeneWiki" id="Centaurin,_alpha_1"/>
<dbReference type="GenomeRNAi" id="11033"/>
<dbReference type="Pharos" id="O75689">
    <property type="development level" value="Tbio"/>
</dbReference>
<dbReference type="PRO" id="PR:O75689"/>
<dbReference type="Proteomes" id="UP000005640">
    <property type="component" value="Chromosome 7"/>
</dbReference>
<dbReference type="RNAct" id="O75689">
    <property type="molecule type" value="protein"/>
</dbReference>
<dbReference type="Bgee" id="ENSG00000105963">
    <property type="expression patterns" value="Expressed in C1 segment of cervical spinal cord and 97 other cell types or tissues"/>
</dbReference>
<dbReference type="ExpressionAtlas" id="O75689">
    <property type="expression patterns" value="baseline and differential"/>
</dbReference>
<dbReference type="GO" id="GO:0005737">
    <property type="term" value="C:cytoplasm"/>
    <property type="evidence" value="ECO:0000314"/>
    <property type="project" value="UniProtKB"/>
</dbReference>
<dbReference type="GO" id="GO:0005829">
    <property type="term" value="C:cytosol"/>
    <property type="evidence" value="ECO:0000314"/>
    <property type="project" value="HPA"/>
</dbReference>
<dbReference type="GO" id="GO:0043231">
    <property type="term" value="C:intracellular membrane-bounded organelle"/>
    <property type="evidence" value="ECO:0000318"/>
    <property type="project" value="GO_Central"/>
</dbReference>
<dbReference type="GO" id="GO:0005634">
    <property type="term" value="C:nucleus"/>
    <property type="evidence" value="ECO:0000314"/>
    <property type="project" value="UniProtKB"/>
</dbReference>
<dbReference type="GO" id="GO:0005886">
    <property type="term" value="C:plasma membrane"/>
    <property type="evidence" value="ECO:0000314"/>
    <property type="project" value="HPA"/>
</dbReference>
<dbReference type="GO" id="GO:0005096">
    <property type="term" value="F:GTPase activator activity"/>
    <property type="evidence" value="ECO:0000314"/>
    <property type="project" value="UniProtKB"/>
</dbReference>
<dbReference type="GO" id="GO:0043533">
    <property type="term" value="F:inositol 1,3,4,5 tetrakisphosphate binding"/>
    <property type="evidence" value="ECO:0000304"/>
    <property type="project" value="UniProtKB"/>
</dbReference>
<dbReference type="GO" id="GO:1902936">
    <property type="term" value="F:phosphatidylinositol bisphosphate binding"/>
    <property type="evidence" value="ECO:0007669"/>
    <property type="project" value="InterPro"/>
</dbReference>
<dbReference type="GO" id="GO:0005547">
    <property type="term" value="F:phosphatidylinositol-3,4,5-trisphosphate binding"/>
    <property type="evidence" value="ECO:0000318"/>
    <property type="project" value="GO_Central"/>
</dbReference>
<dbReference type="GO" id="GO:0008270">
    <property type="term" value="F:zinc ion binding"/>
    <property type="evidence" value="ECO:0007669"/>
    <property type="project" value="UniProtKB-KW"/>
</dbReference>
<dbReference type="GO" id="GO:0007166">
    <property type="term" value="P:cell surface receptor signaling pathway"/>
    <property type="evidence" value="ECO:0000304"/>
    <property type="project" value="ProtInc"/>
</dbReference>
<dbReference type="GO" id="GO:0043087">
    <property type="term" value="P:regulation of GTPase activity"/>
    <property type="evidence" value="ECO:0000315"/>
    <property type="project" value="UniProtKB"/>
</dbReference>
<dbReference type="CDD" id="cd08843">
    <property type="entry name" value="ArfGap_ADAP1"/>
    <property type="match status" value="1"/>
</dbReference>
<dbReference type="CDD" id="cd13252">
    <property type="entry name" value="PH1_ADAP"/>
    <property type="match status" value="1"/>
</dbReference>
<dbReference type="CDD" id="cd01251">
    <property type="entry name" value="PH2_ADAP"/>
    <property type="match status" value="1"/>
</dbReference>
<dbReference type="FunFam" id="1.10.220.150:FF:000011">
    <property type="entry name" value="Arf-GAP with dual PH domain-containing protein 1"/>
    <property type="match status" value="1"/>
</dbReference>
<dbReference type="FunFam" id="2.30.29.30:FF:000080">
    <property type="entry name" value="Arf-GAP with dual PH domain-containing protein 1"/>
    <property type="match status" value="1"/>
</dbReference>
<dbReference type="FunFam" id="2.30.29.30:FF:000099">
    <property type="entry name" value="Arf-GAP with dual PH domain-containing protein 1"/>
    <property type="match status" value="1"/>
</dbReference>
<dbReference type="Gene3D" id="1.10.220.150">
    <property type="entry name" value="Arf GTPase activating protein"/>
    <property type="match status" value="1"/>
</dbReference>
<dbReference type="Gene3D" id="2.30.29.30">
    <property type="entry name" value="Pleckstrin-homology domain (PH domain)/Phosphotyrosine-binding domain (PTB)"/>
    <property type="match status" value="2"/>
</dbReference>
<dbReference type="InterPro" id="IPR052589">
    <property type="entry name" value="Arf-GAP_dual-PH_domain"/>
</dbReference>
<dbReference type="InterPro" id="IPR037278">
    <property type="entry name" value="ARFGAP/RecO"/>
</dbReference>
<dbReference type="InterPro" id="IPR001164">
    <property type="entry name" value="ArfGAP_dom"/>
</dbReference>
<dbReference type="InterPro" id="IPR038508">
    <property type="entry name" value="ArfGAP_dom_sf"/>
</dbReference>
<dbReference type="InterPro" id="IPR011993">
    <property type="entry name" value="PH-like_dom_sf"/>
</dbReference>
<dbReference type="InterPro" id="IPR037849">
    <property type="entry name" value="PH1_ADAP"/>
</dbReference>
<dbReference type="InterPro" id="IPR037851">
    <property type="entry name" value="PH2_ADAP"/>
</dbReference>
<dbReference type="InterPro" id="IPR001849">
    <property type="entry name" value="PH_domain"/>
</dbReference>
<dbReference type="PANTHER" id="PTHR46021:SF5">
    <property type="entry name" value="ARF-GAP WITH DUAL PH DOMAIN-CONTAINING PROTEIN 1"/>
    <property type="match status" value="1"/>
</dbReference>
<dbReference type="PANTHER" id="PTHR46021">
    <property type="entry name" value="ARF-GAP WITH DUAL PH DOMAIN-CONTAINING PROTEIN 1-LIKE PROTEIN"/>
    <property type="match status" value="1"/>
</dbReference>
<dbReference type="Pfam" id="PF01412">
    <property type="entry name" value="ArfGap"/>
    <property type="match status" value="1"/>
</dbReference>
<dbReference type="Pfam" id="PF00169">
    <property type="entry name" value="PH"/>
    <property type="match status" value="2"/>
</dbReference>
<dbReference type="PRINTS" id="PR00405">
    <property type="entry name" value="REVINTRACTNG"/>
</dbReference>
<dbReference type="SMART" id="SM00105">
    <property type="entry name" value="ArfGap"/>
    <property type="match status" value="1"/>
</dbReference>
<dbReference type="SMART" id="SM00233">
    <property type="entry name" value="PH"/>
    <property type="match status" value="2"/>
</dbReference>
<dbReference type="SUPFAM" id="SSF57863">
    <property type="entry name" value="ArfGap/RecO-like zinc finger"/>
    <property type="match status" value="1"/>
</dbReference>
<dbReference type="SUPFAM" id="SSF50729">
    <property type="entry name" value="PH domain-like"/>
    <property type="match status" value="2"/>
</dbReference>
<dbReference type="PROSITE" id="PS50115">
    <property type="entry name" value="ARFGAP"/>
    <property type="match status" value="1"/>
</dbReference>
<dbReference type="PROSITE" id="PS50003">
    <property type="entry name" value="PH_DOMAIN"/>
    <property type="match status" value="2"/>
</dbReference>
<feature type="chain" id="PRO_0000074205" description="Arf-GAP with dual PH domain-containing protein 1">
    <location>
        <begin position="1"/>
        <end position="374"/>
    </location>
</feature>
<feature type="domain" description="Arf-GAP" evidence="2">
    <location>
        <begin position="7"/>
        <end position="126"/>
    </location>
</feature>
<feature type="domain" description="PH 1" evidence="1">
    <location>
        <begin position="129"/>
        <end position="230"/>
    </location>
</feature>
<feature type="domain" description="PH 2" evidence="1">
    <location>
        <begin position="252"/>
        <end position="356"/>
    </location>
</feature>
<feature type="zinc finger region" description="C4-type" evidence="2">
    <location>
        <begin position="21"/>
        <end position="44"/>
    </location>
</feature>
<feature type="modified residue" description="Phosphoserine; by PKC" evidence="6">
    <location>
        <position position="87"/>
    </location>
</feature>
<feature type="modified residue" description="N6-acetyllysine" evidence="17">
    <location>
        <position position="272"/>
    </location>
</feature>
<feature type="modified residue" description="Phosphothreonine; by PKC" evidence="6">
    <location>
        <position position="276"/>
    </location>
</feature>
<feature type="splice variant" id="VSP_054793" description="In isoform 3." evidence="11">
    <location>
        <begin position="1"/>
        <end position="72"/>
    </location>
</feature>
<feature type="splice variant" id="VSP_054794" description="In isoform 2." evidence="11">
    <original>MAKERRRAVLELLQRPGNARCADCGAP</original>
    <variation>MFQFVFSRVYCINPARRKWKEFEKMLGCAEEGHASLGR</variation>
    <location>
        <begin position="1"/>
        <end position="27"/>
    </location>
</feature>
<feature type="sequence variant" id="VAR_047470" description="In dbSNP:rs10256887." evidence="3 5 7 9">
    <original>G</original>
    <variation>S</variation>
    <location>
        <position position="241"/>
    </location>
</feature>
<feature type="mutagenesis site" description="Loss of GTPase-activating activity." evidence="3">
    <original>C</original>
    <variation>A</variation>
    <location>
        <position position="21"/>
    </location>
</feature>
<feature type="mutagenesis site" description="Loss of GTPase-activating activity." evidence="3">
    <original>C</original>
    <variation>A</variation>
    <location>
        <position position="24"/>
    </location>
</feature>
<feature type="mutagenesis site" description="40-45% reduction in PtdInsP2 3-kinase dependent membrane localization. Almost complete loss of PtdInsP2 3-kinase dependent membrane localization; when associated with C-273." evidence="3 4">
    <original>R</original>
    <variation>C</variation>
    <location>
        <position position="149"/>
    </location>
</feature>
<feature type="mutagenesis site" description="70% reduction in PtdInsP2 3-kinase dependent membrane localization. Almost complete loss of PtdInsP2 3-kinase dependent membrane localization; when associated with C-149." evidence="3 4">
    <original>R</original>
    <variation>C</variation>
    <location>
        <position position="273"/>
    </location>
</feature>
<feature type="sequence conflict" description="In Ref. 5; BAG52556." evidence="12" ref="5">
    <original>G</original>
    <variation>R</variation>
    <location>
        <position position="215"/>
    </location>
</feature>
<feature type="helix" evidence="19">
    <location>
        <begin position="3"/>
        <end position="12"/>
    </location>
</feature>
<feature type="helix" evidence="19">
    <location>
        <begin position="16"/>
        <end position="18"/>
    </location>
</feature>
<feature type="turn" evidence="19">
    <location>
        <begin position="22"/>
        <end position="24"/>
    </location>
</feature>
<feature type="strand" evidence="19">
    <location>
        <begin position="31"/>
        <end position="33"/>
    </location>
</feature>
<feature type="turn" evidence="19">
    <location>
        <begin position="34"/>
        <end position="37"/>
    </location>
</feature>
<feature type="strand" evidence="19">
    <location>
        <begin position="38"/>
        <end position="40"/>
    </location>
</feature>
<feature type="helix" evidence="19">
    <location>
        <begin position="42"/>
        <end position="49"/>
    </location>
</feature>
<feature type="turn" evidence="19">
    <location>
        <begin position="52"/>
        <end position="54"/>
    </location>
</feature>
<feature type="strand" evidence="19">
    <location>
        <begin position="57"/>
        <end position="59"/>
    </location>
</feature>
<feature type="turn" evidence="19">
    <location>
        <begin position="60"/>
        <end position="62"/>
    </location>
</feature>
<feature type="helix" evidence="19">
    <location>
        <begin position="67"/>
        <end position="75"/>
    </location>
</feature>
<feature type="helix" evidence="19">
    <location>
        <begin position="78"/>
        <end position="85"/>
    </location>
</feature>
<feature type="turn" evidence="19">
    <location>
        <begin position="86"/>
        <end position="88"/>
    </location>
</feature>
<feature type="helix" evidence="19">
    <location>
        <begin position="102"/>
        <end position="113"/>
    </location>
</feature>
<feature type="turn" evidence="19">
    <location>
        <begin position="117"/>
        <end position="119"/>
    </location>
</feature>
<feature type="helix" evidence="19">
    <location>
        <begin position="121"/>
        <end position="124"/>
    </location>
</feature>
<feature type="helix" evidence="19">
    <location>
        <begin position="125"/>
        <end position="128"/>
    </location>
</feature>
<feature type="strand" evidence="19">
    <location>
        <begin position="129"/>
        <end position="139"/>
    </location>
</feature>
<feature type="strand" evidence="19">
    <location>
        <begin position="141"/>
        <end position="143"/>
    </location>
</feature>
<feature type="strand" evidence="19">
    <location>
        <begin position="146"/>
        <end position="154"/>
    </location>
</feature>
<feature type="turn" evidence="19">
    <location>
        <begin position="155"/>
        <end position="158"/>
    </location>
</feature>
<feature type="strand" evidence="19">
    <location>
        <begin position="159"/>
        <end position="163"/>
    </location>
</feature>
<feature type="strand" evidence="18">
    <location>
        <begin position="165"/>
        <end position="167"/>
    </location>
</feature>
<feature type="strand" evidence="19">
    <location>
        <begin position="172"/>
        <end position="176"/>
    </location>
</feature>
<feature type="helix" evidence="19">
    <location>
        <begin position="177"/>
        <end position="179"/>
    </location>
</feature>
<feature type="strand" evidence="19">
    <location>
        <begin position="180"/>
        <end position="184"/>
    </location>
</feature>
<feature type="helix" evidence="19">
    <location>
        <begin position="186"/>
        <end position="189"/>
    </location>
</feature>
<feature type="strand" evidence="19">
    <location>
        <begin position="195"/>
        <end position="201"/>
    </location>
</feature>
<feature type="strand" evidence="19">
    <location>
        <begin position="204"/>
        <end position="211"/>
    </location>
</feature>
<feature type="helix" evidence="19">
    <location>
        <begin position="215"/>
        <end position="236"/>
    </location>
</feature>
<feature type="strand" evidence="20">
    <location>
        <begin position="237"/>
        <end position="240"/>
    </location>
</feature>
<feature type="helix" evidence="19">
    <location>
        <begin position="242"/>
        <end position="245"/>
    </location>
</feature>
<feature type="helix" evidence="19">
    <location>
        <begin position="246"/>
        <end position="248"/>
    </location>
</feature>
<feature type="strand" evidence="19">
    <location>
        <begin position="254"/>
        <end position="261"/>
    </location>
</feature>
<feature type="strand" evidence="19">
    <location>
        <begin position="271"/>
        <end position="278"/>
    </location>
</feature>
<feature type="strand" evidence="19">
    <location>
        <begin position="281"/>
        <end position="287"/>
    </location>
</feature>
<feature type="strand" evidence="19">
    <location>
        <begin position="294"/>
        <end position="298"/>
    </location>
</feature>
<feature type="helix" evidence="19">
    <location>
        <begin position="302"/>
        <end position="304"/>
    </location>
</feature>
<feature type="strand" evidence="19">
    <location>
        <begin position="307"/>
        <end position="311"/>
    </location>
</feature>
<feature type="strand" evidence="19">
    <location>
        <begin position="323"/>
        <end position="328"/>
    </location>
</feature>
<feature type="strand" evidence="19">
    <location>
        <begin position="333"/>
        <end position="340"/>
    </location>
</feature>
<feature type="helix" evidence="19">
    <location>
        <begin position="341"/>
        <end position="356"/>
    </location>
</feature>
<feature type="helix" evidence="19">
    <location>
        <begin position="363"/>
        <end position="369"/>
    </location>
</feature>
<name>ADAP1_HUMAN</name>
<comment type="function">
    <text evidence="4 8 10 12">GTPase-activating protein for the ADP ribosylation factor family (Probable). Binds phosphatidylinositol 3,4,5-trisphosphate (PtdInsP3) and inositol 1,3,4,5-tetrakisphosphate (InsP4). Regulates the incorporation of CD63 and CD9 into multivesicular bodies (PubMed:38682696).</text>
</comment>
<comment type="subunit">
    <text evidence="6">Interacts with PRKCA, PRKCI and PRKCZ. Interacts with the N-terminal region of PRKD1.</text>
</comment>
<comment type="interaction">
    <interactant intactId="EBI-714732">
        <id>O75689</id>
    </interactant>
    <interactant intactId="EBI-739789">
        <id>Q92997</id>
        <label>DVL3</label>
    </interactant>
    <organismsDiffer>false</organismsDiffer>
    <experiments>3</experiments>
</comment>
<comment type="interaction">
    <interactant intactId="EBI-714732">
        <id>O75689</id>
    </interactant>
    <interactant intactId="EBI-618309">
        <id>Q08379</id>
        <label>GOLGA2</label>
    </interactant>
    <organismsDiffer>false</organismsDiffer>
    <experiments>3</experiments>
</comment>
<comment type="interaction">
    <interactant intactId="EBI-714732">
        <id>O75689</id>
    </interactant>
    <interactant intactId="EBI-766408">
        <id>Q9NQT8</id>
        <label>KIF13B</label>
    </interactant>
    <organismsDiffer>false</organismsDiffer>
    <experiments>6</experiments>
</comment>
<comment type="interaction">
    <interactant intactId="EBI-714732">
        <id>O75689</id>
    </interactant>
    <interactant intactId="EBI-742388">
        <id>Q9H8W4</id>
        <label>PLEKHF2</label>
    </interactant>
    <organismsDiffer>false</organismsDiffer>
    <experiments>3</experiments>
</comment>
<comment type="interaction">
    <interactant intactId="EBI-714732">
        <id>O75689</id>
    </interactant>
    <interactant intactId="EBI-742426">
        <id>Q9H190</id>
        <label>SDCBP2</label>
    </interactant>
    <organismsDiffer>false</organismsDiffer>
    <experiments>3</experiments>
</comment>
<comment type="subcellular location">
    <subcellularLocation>
        <location>Nucleus</location>
    </subcellularLocation>
    <subcellularLocation>
        <location>Cytoplasm</location>
    </subcellularLocation>
    <text>Recruited to the plasma membrane upon epidermal growth factor-dependent activation of phosphatidylinositol 4,5-diphosphate (PtdInsP2) 3-kinase.</text>
</comment>
<comment type="alternative products">
    <event type="alternative splicing"/>
    <isoform>
        <id>O75689-1</id>
        <name>1</name>
        <sequence type="displayed"/>
    </isoform>
    <isoform>
        <id>O75689-2</id>
        <name>2</name>
        <sequence type="described" ref="VSP_054794"/>
    </isoform>
    <isoform>
        <id>O75689-3</id>
        <name>3</name>
        <sequence type="described" ref="VSP_054793"/>
    </isoform>
</comment>
<comment type="tissue specificity">
    <text evidence="4">Expressed at highest levels in brain and at lower levels in peripheral blood leukocytes.</text>
</comment>
<comment type="PTM">
    <text evidence="6">Phosphorylated by PRKCA, PRKCI, PRKCZ and PRKD1 in vitro.</text>
</comment>
<accession>O75689</accession>
<accession>A4D2Q2</accession>
<accession>B3KRZ4</accession>
<accession>B4DVA6</accession>
<accession>F6XZ68</accession>
<accession>H7C2Q4</accession>
<gene>
    <name type="primary">ADAP1</name>
    <name type="synonym">CENTA1</name>
</gene>
<keyword id="KW-0002">3D-structure</keyword>
<keyword id="KW-0007">Acetylation</keyword>
<keyword id="KW-0025">Alternative splicing</keyword>
<keyword id="KW-0963">Cytoplasm</keyword>
<keyword id="KW-0343">GTPase activation</keyword>
<keyword id="KW-0479">Metal-binding</keyword>
<keyword id="KW-0539">Nucleus</keyword>
<keyword id="KW-0597">Phosphoprotein</keyword>
<keyword id="KW-1267">Proteomics identification</keyword>
<keyword id="KW-1185">Reference proteome</keyword>
<keyword id="KW-0677">Repeat</keyword>
<keyword id="KW-0862">Zinc</keyword>
<keyword id="KW-0863">Zinc-finger</keyword>
<proteinExistence type="evidence at protein level"/>
<protein>
    <recommendedName>
        <fullName>Arf-GAP with dual PH domain-containing protein 1</fullName>
    </recommendedName>
    <alternativeName>
        <fullName>Centaurin-alpha-1</fullName>
        <shortName>Cnt-a1</shortName>
    </alternativeName>
    <alternativeName>
        <fullName>Putative MAPK-activating protein PM25</fullName>
    </alternativeName>
</protein>
<sequence>MAKERRRAVLELLQRPGNARCADCGAPDPDWASYTLGVFICLSCSGIHRNIPQVSKVKSVRLDAWEEAQVEFMASHGNDAARARFESKVPSFYYRPTPSDCQLLREQWIRAKYERQEFIYPEKQEPYSAGYREGFLWKRGRDNGQFLSRKFVLTEREGALKYFNRNDAKEPKAVMKIEHLNATFQPAKIGHPHGLQVTYLKDNSTRNIFIYHEDGKEIVDWFNALRAARFHYLQVAFPGAGDADLVPKLSRNYLKEGYMEKTGPKQTEGFRKRWFTMDDRRLMYFKDPLDAFARGEVFIGSKESGYTVLHGFPPSTQGHHWPHGITIVTPDRKFLFACETESDQREWVAAFQKAVDRPMLPQEYAVEAHFKHKP</sequence>
<organism>
    <name type="scientific">Homo sapiens</name>
    <name type="common">Human</name>
    <dbReference type="NCBI Taxonomy" id="9606"/>
    <lineage>
        <taxon>Eukaryota</taxon>
        <taxon>Metazoa</taxon>
        <taxon>Chordata</taxon>
        <taxon>Craniata</taxon>
        <taxon>Vertebrata</taxon>
        <taxon>Euteleostomi</taxon>
        <taxon>Mammalia</taxon>
        <taxon>Eutheria</taxon>
        <taxon>Euarchontoglires</taxon>
        <taxon>Primates</taxon>
        <taxon>Haplorrhini</taxon>
        <taxon>Catarrhini</taxon>
        <taxon>Hominidae</taxon>
        <taxon>Homo</taxon>
    </lineage>
</organism>